<protein>
    <recommendedName>
        <fullName>Transposase for insertion sequence element IS905</fullName>
    </recommendedName>
</protein>
<keyword id="KW-0233">DNA recombination</keyword>
<keyword id="KW-0238">DNA-binding</keyword>
<keyword id="KW-1185">Reference proteome</keyword>
<keyword id="KW-0814">Transposable element</keyword>
<keyword id="KW-0815">Transposition</keyword>
<name>TRA5_LACLA</name>
<sequence>MTQFTTELLNFLAQKQDIDEFFRTSLETAMNDLLQAELSAFLGYEPYDKVGYNSGNSRNGSYSRQFETKYGTVQLSIPRDRNGNFSPALLPAYGRRDDHLEEMVIKLYQTGVTTREISDIIERMYGHHYSPATISNISKATQENVATFHERSLEANYSVLFLDGTYLPLRRGTVSKECIHIALGITPEGQKAVLGYEIAPNENNASWSTLLDKLQNQGIQQVSLVVTDGFKGLEQIISQAYPLAKQQRCLIHISRNLASKVKRADRAVILEQFKTIYRAENLEMAVQALENFIAEWKPKYRKVMESLENTDNLLTFYQFPYQIWHSIYSTNLIESLNKEIKRQTKKKVLFPNEEALERYLVTLFEDYNFKQSQRIHKGFGQCADTLESLFD</sequence>
<feature type="chain" id="PRO_0000211348" description="Transposase for insertion sequence element IS905">
    <location>
        <begin position="1"/>
        <end position="391"/>
    </location>
</feature>
<gene>
    <name type="primary">tra905</name>
    <name type="ordered locus">LL1204</name>
    <name type="ORF">L24515</name>
</gene>
<proteinExistence type="inferred from homology"/>
<evidence type="ECO:0000305" key="1"/>
<dbReference type="EMBL" id="L20851">
    <property type="protein sequence ID" value="AAA25167.1"/>
    <property type="molecule type" value="Genomic_DNA"/>
</dbReference>
<dbReference type="EMBL" id="AE005176">
    <property type="protein sequence ID" value="AAK05302.1"/>
    <property type="molecule type" value="Genomic_DNA"/>
</dbReference>
<dbReference type="PIR" id="D86775">
    <property type="entry name" value="D86775"/>
</dbReference>
<dbReference type="RefSeq" id="NP_267360.1">
    <property type="nucleotide sequence ID" value="NC_002662.1"/>
</dbReference>
<dbReference type="RefSeq" id="WP_003138385.1">
    <property type="nucleotide sequence ID" value="NC_002662.1"/>
</dbReference>
<dbReference type="SMR" id="P35881"/>
<dbReference type="PaxDb" id="272623-L24515"/>
<dbReference type="EnsemblBacteria" id="AAK05302">
    <property type="protein sequence ID" value="AAK05302"/>
    <property type="gene ID" value="L24515"/>
</dbReference>
<dbReference type="KEGG" id="lla:L24515"/>
<dbReference type="PATRIC" id="fig|272623.7.peg.1299"/>
<dbReference type="eggNOG" id="COG3328">
    <property type="taxonomic scope" value="Bacteria"/>
</dbReference>
<dbReference type="HOGENOM" id="CLU_036805_8_4_9"/>
<dbReference type="OrthoDB" id="9779930at2"/>
<dbReference type="Proteomes" id="UP000002196">
    <property type="component" value="Chromosome"/>
</dbReference>
<dbReference type="GO" id="GO:0003677">
    <property type="term" value="F:DNA binding"/>
    <property type="evidence" value="ECO:0007669"/>
    <property type="project" value="UniProtKB-KW"/>
</dbReference>
<dbReference type="GO" id="GO:0004803">
    <property type="term" value="F:transposase activity"/>
    <property type="evidence" value="ECO:0007669"/>
    <property type="project" value="InterPro"/>
</dbReference>
<dbReference type="GO" id="GO:0006313">
    <property type="term" value="P:DNA transposition"/>
    <property type="evidence" value="ECO:0007669"/>
    <property type="project" value="InterPro"/>
</dbReference>
<dbReference type="InterPro" id="IPR001207">
    <property type="entry name" value="Transposase_mutator"/>
</dbReference>
<dbReference type="NCBIfam" id="NF033543">
    <property type="entry name" value="transpos_IS256"/>
    <property type="match status" value="1"/>
</dbReference>
<dbReference type="PANTHER" id="PTHR33217:SF8">
    <property type="entry name" value="MUTATOR FAMILY TRANSPOSASE"/>
    <property type="match status" value="1"/>
</dbReference>
<dbReference type="PANTHER" id="PTHR33217">
    <property type="entry name" value="TRANSPOSASE FOR INSERTION SEQUENCE ELEMENT IS1081"/>
    <property type="match status" value="1"/>
</dbReference>
<dbReference type="Pfam" id="PF00872">
    <property type="entry name" value="Transposase_mut"/>
    <property type="match status" value="1"/>
</dbReference>
<dbReference type="PROSITE" id="PS01007">
    <property type="entry name" value="TRANSPOSASE_MUTATOR"/>
    <property type="match status" value="1"/>
</dbReference>
<reference key="1">
    <citation type="journal article" date="1994" name="J. Bacteriol.">
        <title>Characterization of IS905, a new multicopy insertion sequence identified in lactococci.</title>
        <authorList>
            <person name="Dodd H.M."/>
            <person name="Horn N."/>
            <person name="Gasson M.J."/>
        </authorList>
    </citation>
    <scope>NUCLEOTIDE SEQUENCE [GENOMIC DNA]</scope>
    <source>
        <strain>FI5876</strain>
    </source>
</reference>
<reference key="2">
    <citation type="journal article" date="2001" name="Genome Res.">
        <title>The complete genome sequence of the lactic acid bacterium Lactococcus lactis ssp. lactis IL1403.</title>
        <authorList>
            <person name="Bolotin A."/>
            <person name="Wincker P."/>
            <person name="Mauger S."/>
            <person name="Jaillon O."/>
            <person name="Malarme K."/>
            <person name="Weissenbach J."/>
            <person name="Ehrlich S.D."/>
            <person name="Sorokin A."/>
        </authorList>
    </citation>
    <scope>NUCLEOTIDE SEQUENCE [LARGE SCALE GENOMIC DNA]</scope>
    <source>
        <strain>IL1403</strain>
    </source>
</reference>
<organism>
    <name type="scientific">Lactococcus lactis subsp. lactis (strain IL1403)</name>
    <name type="common">Streptococcus lactis</name>
    <dbReference type="NCBI Taxonomy" id="272623"/>
    <lineage>
        <taxon>Bacteria</taxon>
        <taxon>Bacillati</taxon>
        <taxon>Bacillota</taxon>
        <taxon>Bacilli</taxon>
        <taxon>Lactobacillales</taxon>
        <taxon>Streptococcaceae</taxon>
        <taxon>Lactococcus</taxon>
    </lineage>
</organism>
<comment type="function">
    <text>Required for the transposition of the insertion element.</text>
</comment>
<comment type="similarity">
    <text evidence="1">Belongs to the transposase mutator family.</text>
</comment>
<accession>P35881</accession>